<feature type="chain" id="PRO_0000270447" description="Methionine import ATP-binding protein MetN 2">
    <location>
        <begin position="1"/>
        <end position="328"/>
    </location>
</feature>
<feature type="domain" description="ABC transporter" evidence="1">
    <location>
        <begin position="2"/>
        <end position="241"/>
    </location>
</feature>
<feature type="binding site" evidence="1">
    <location>
        <begin position="38"/>
        <end position="45"/>
    </location>
    <ligand>
        <name>ATP</name>
        <dbReference type="ChEBI" id="CHEBI:30616"/>
    </ligand>
</feature>
<organism>
    <name type="scientific">Yersinia pestis</name>
    <dbReference type="NCBI Taxonomy" id="632"/>
    <lineage>
        <taxon>Bacteria</taxon>
        <taxon>Pseudomonadati</taxon>
        <taxon>Pseudomonadota</taxon>
        <taxon>Gammaproteobacteria</taxon>
        <taxon>Enterobacterales</taxon>
        <taxon>Yersiniaceae</taxon>
        <taxon>Yersinia</taxon>
    </lineage>
</organism>
<keyword id="KW-0029">Amino-acid transport</keyword>
<keyword id="KW-0067">ATP-binding</keyword>
<keyword id="KW-0997">Cell inner membrane</keyword>
<keyword id="KW-1003">Cell membrane</keyword>
<keyword id="KW-0472">Membrane</keyword>
<keyword id="KW-0547">Nucleotide-binding</keyword>
<keyword id="KW-1185">Reference proteome</keyword>
<keyword id="KW-1278">Translocase</keyword>
<keyword id="KW-0813">Transport</keyword>
<name>METN2_YERPE</name>
<comment type="function">
    <text evidence="1">Part of the ABC transporter complex MetNIQ involved in methionine import. Responsible for energy coupling to the transport system.</text>
</comment>
<comment type="catalytic activity">
    <reaction evidence="1">
        <text>L-methionine(out) + ATP + H2O = L-methionine(in) + ADP + phosphate + H(+)</text>
        <dbReference type="Rhea" id="RHEA:29779"/>
        <dbReference type="ChEBI" id="CHEBI:15377"/>
        <dbReference type="ChEBI" id="CHEBI:15378"/>
        <dbReference type="ChEBI" id="CHEBI:30616"/>
        <dbReference type="ChEBI" id="CHEBI:43474"/>
        <dbReference type="ChEBI" id="CHEBI:57844"/>
        <dbReference type="ChEBI" id="CHEBI:456216"/>
        <dbReference type="EC" id="7.4.2.11"/>
    </reaction>
</comment>
<comment type="catalytic activity">
    <reaction evidence="1">
        <text>D-methionine(out) + ATP + H2O = D-methionine(in) + ADP + phosphate + H(+)</text>
        <dbReference type="Rhea" id="RHEA:29767"/>
        <dbReference type="ChEBI" id="CHEBI:15377"/>
        <dbReference type="ChEBI" id="CHEBI:15378"/>
        <dbReference type="ChEBI" id="CHEBI:30616"/>
        <dbReference type="ChEBI" id="CHEBI:43474"/>
        <dbReference type="ChEBI" id="CHEBI:57932"/>
        <dbReference type="ChEBI" id="CHEBI:456216"/>
        <dbReference type="EC" id="7.4.2.11"/>
    </reaction>
</comment>
<comment type="subunit">
    <text evidence="1">The complex is composed of two ATP-binding proteins (MetN), two transmembrane proteins (MetI) and a solute-binding protein (MetQ).</text>
</comment>
<comment type="subcellular location">
    <subcellularLocation>
        <location evidence="1">Cell inner membrane</location>
        <topology evidence="1">Peripheral membrane protein</topology>
    </subcellularLocation>
</comment>
<comment type="similarity">
    <text evidence="1">Belongs to the ABC transporter superfamily. Methionine importer (TC 3.A.1.24) family.</text>
</comment>
<gene>
    <name evidence="1" type="primary">metN2</name>
    <name type="ordered locus">YPO1318</name>
    <name type="ordered locus">y2866</name>
    <name type="ordered locus">YP_1274</name>
</gene>
<reference key="1">
    <citation type="journal article" date="2001" name="Nature">
        <title>Genome sequence of Yersinia pestis, the causative agent of plague.</title>
        <authorList>
            <person name="Parkhill J."/>
            <person name="Wren B.W."/>
            <person name="Thomson N.R."/>
            <person name="Titball R.W."/>
            <person name="Holden M.T.G."/>
            <person name="Prentice M.B."/>
            <person name="Sebaihia M."/>
            <person name="James K.D."/>
            <person name="Churcher C.M."/>
            <person name="Mungall K.L."/>
            <person name="Baker S."/>
            <person name="Basham D."/>
            <person name="Bentley S.D."/>
            <person name="Brooks K."/>
            <person name="Cerdeno-Tarraga A.-M."/>
            <person name="Chillingworth T."/>
            <person name="Cronin A."/>
            <person name="Davies R.M."/>
            <person name="Davis P."/>
            <person name="Dougan G."/>
            <person name="Feltwell T."/>
            <person name="Hamlin N."/>
            <person name="Holroyd S."/>
            <person name="Jagels K."/>
            <person name="Karlyshev A.V."/>
            <person name="Leather S."/>
            <person name="Moule S."/>
            <person name="Oyston P.C.F."/>
            <person name="Quail M.A."/>
            <person name="Rutherford K.M."/>
            <person name="Simmonds M."/>
            <person name="Skelton J."/>
            <person name="Stevens K."/>
            <person name="Whitehead S."/>
            <person name="Barrell B.G."/>
        </authorList>
    </citation>
    <scope>NUCLEOTIDE SEQUENCE [LARGE SCALE GENOMIC DNA]</scope>
    <source>
        <strain>CO-92 / Biovar Orientalis</strain>
    </source>
</reference>
<reference key="2">
    <citation type="journal article" date="2002" name="J. Bacteriol.">
        <title>Genome sequence of Yersinia pestis KIM.</title>
        <authorList>
            <person name="Deng W."/>
            <person name="Burland V."/>
            <person name="Plunkett G. III"/>
            <person name="Boutin A."/>
            <person name="Mayhew G.F."/>
            <person name="Liss P."/>
            <person name="Perna N.T."/>
            <person name="Rose D.J."/>
            <person name="Mau B."/>
            <person name="Zhou S."/>
            <person name="Schwartz D.C."/>
            <person name="Fetherston J.D."/>
            <person name="Lindler L.E."/>
            <person name="Brubaker R.R."/>
            <person name="Plano G.V."/>
            <person name="Straley S.C."/>
            <person name="McDonough K.A."/>
            <person name="Nilles M.L."/>
            <person name="Matson J.S."/>
            <person name="Blattner F.R."/>
            <person name="Perry R.D."/>
        </authorList>
    </citation>
    <scope>NUCLEOTIDE SEQUENCE [LARGE SCALE GENOMIC DNA]</scope>
    <source>
        <strain>KIM10+ / Biovar Mediaevalis</strain>
    </source>
</reference>
<reference key="3">
    <citation type="journal article" date="2004" name="DNA Res.">
        <title>Complete genome sequence of Yersinia pestis strain 91001, an isolate avirulent to humans.</title>
        <authorList>
            <person name="Song Y."/>
            <person name="Tong Z."/>
            <person name="Wang J."/>
            <person name="Wang L."/>
            <person name="Guo Z."/>
            <person name="Han Y."/>
            <person name="Zhang J."/>
            <person name="Pei D."/>
            <person name="Zhou D."/>
            <person name="Qin H."/>
            <person name="Pang X."/>
            <person name="Han Y."/>
            <person name="Zhai J."/>
            <person name="Li M."/>
            <person name="Cui B."/>
            <person name="Qi Z."/>
            <person name="Jin L."/>
            <person name="Dai R."/>
            <person name="Chen F."/>
            <person name="Li S."/>
            <person name="Ye C."/>
            <person name="Du Z."/>
            <person name="Lin W."/>
            <person name="Wang J."/>
            <person name="Yu J."/>
            <person name="Yang H."/>
            <person name="Wang J."/>
            <person name="Huang P."/>
            <person name="Yang R."/>
        </authorList>
    </citation>
    <scope>NUCLEOTIDE SEQUENCE [LARGE SCALE GENOMIC DNA]</scope>
    <source>
        <strain>91001 / Biovar Mediaevalis</strain>
    </source>
</reference>
<protein>
    <recommendedName>
        <fullName evidence="1">Methionine import ATP-binding protein MetN 2</fullName>
        <ecNumber evidence="1">7.4.2.11</ecNumber>
    </recommendedName>
</protein>
<proteinExistence type="inferred from homology"/>
<dbReference type="EC" id="7.4.2.11" evidence="1"/>
<dbReference type="EMBL" id="AL590842">
    <property type="protein sequence ID" value="CAL19971.1"/>
    <property type="molecule type" value="Genomic_DNA"/>
</dbReference>
<dbReference type="EMBL" id="AE009952">
    <property type="protein sequence ID" value="AAM86417.1"/>
    <property type="molecule type" value="Genomic_DNA"/>
</dbReference>
<dbReference type="EMBL" id="AE017042">
    <property type="protein sequence ID" value="AAS61517.1"/>
    <property type="molecule type" value="Genomic_DNA"/>
</dbReference>
<dbReference type="PIR" id="AI0160">
    <property type="entry name" value="AI0160"/>
</dbReference>
<dbReference type="RefSeq" id="WP_002208776.1">
    <property type="nucleotide sequence ID" value="NZ_WUCM01000013.1"/>
</dbReference>
<dbReference type="RefSeq" id="YP_002346343.1">
    <property type="nucleotide sequence ID" value="NC_003143.1"/>
</dbReference>
<dbReference type="SMR" id="Q7CHF8"/>
<dbReference type="IntAct" id="Q7CHF8">
    <property type="interactions" value="1"/>
</dbReference>
<dbReference type="STRING" id="214092.YPO1318"/>
<dbReference type="PaxDb" id="214092-YPO1318"/>
<dbReference type="DNASU" id="1147813"/>
<dbReference type="EnsemblBacteria" id="AAS61517">
    <property type="protein sequence ID" value="AAS61517"/>
    <property type="gene ID" value="YP_1274"/>
</dbReference>
<dbReference type="KEGG" id="ype:YPO1318"/>
<dbReference type="KEGG" id="ypk:y2866"/>
<dbReference type="KEGG" id="ypm:YP_1274"/>
<dbReference type="PATRIC" id="fig|214092.21.peg.1630"/>
<dbReference type="eggNOG" id="COG1135">
    <property type="taxonomic scope" value="Bacteria"/>
</dbReference>
<dbReference type="HOGENOM" id="CLU_000604_1_3_6"/>
<dbReference type="OMA" id="ESAMIFQ"/>
<dbReference type="OrthoDB" id="9802264at2"/>
<dbReference type="Proteomes" id="UP000000815">
    <property type="component" value="Chromosome"/>
</dbReference>
<dbReference type="Proteomes" id="UP000001019">
    <property type="component" value="Chromosome"/>
</dbReference>
<dbReference type="Proteomes" id="UP000002490">
    <property type="component" value="Chromosome"/>
</dbReference>
<dbReference type="GO" id="GO:0005886">
    <property type="term" value="C:plasma membrane"/>
    <property type="evidence" value="ECO:0007669"/>
    <property type="project" value="UniProtKB-SubCell"/>
</dbReference>
<dbReference type="GO" id="GO:0033232">
    <property type="term" value="F:ABC-type D-methionine transporter activity"/>
    <property type="evidence" value="ECO:0007669"/>
    <property type="project" value="UniProtKB-EC"/>
</dbReference>
<dbReference type="GO" id="GO:0005524">
    <property type="term" value="F:ATP binding"/>
    <property type="evidence" value="ECO:0007669"/>
    <property type="project" value="UniProtKB-KW"/>
</dbReference>
<dbReference type="GO" id="GO:0016887">
    <property type="term" value="F:ATP hydrolysis activity"/>
    <property type="evidence" value="ECO:0007669"/>
    <property type="project" value="InterPro"/>
</dbReference>
<dbReference type="CDD" id="cd03258">
    <property type="entry name" value="ABC_MetN_methionine_transporter"/>
    <property type="match status" value="1"/>
</dbReference>
<dbReference type="FunFam" id="3.40.50.300:FF:000056">
    <property type="entry name" value="Cell division ATP-binding protein FtsE"/>
    <property type="match status" value="1"/>
</dbReference>
<dbReference type="Gene3D" id="3.30.70.260">
    <property type="match status" value="1"/>
</dbReference>
<dbReference type="Gene3D" id="3.40.50.300">
    <property type="entry name" value="P-loop containing nucleotide triphosphate hydrolases"/>
    <property type="match status" value="1"/>
</dbReference>
<dbReference type="InterPro" id="IPR003593">
    <property type="entry name" value="AAA+_ATPase"/>
</dbReference>
<dbReference type="InterPro" id="IPR003439">
    <property type="entry name" value="ABC_transporter-like_ATP-bd"/>
</dbReference>
<dbReference type="InterPro" id="IPR017871">
    <property type="entry name" value="ABC_transporter-like_CS"/>
</dbReference>
<dbReference type="InterPro" id="IPR045865">
    <property type="entry name" value="ACT-like_dom_sf"/>
</dbReference>
<dbReference type="InterPro" id="IPR041701">
    <property type="entry name" value="MetN_ABC"/>
</dbReference>
<dbReference type="InterPro" id="IPR050086">
    <property type="entry name" value="MetN_ABC_transporter-like"/>
</dbReference>
<dbReference type="InterPro" id="IPR018449">
    <property type="entry name" value="NIL_domain"/>
</dbReference>
<dbReference type="InterPro" id="IPR027417">
    <property type="entry name" value="P-loop_NTPase"/>
</dbReference>
<dbReference type="PANTHER" id="PTHR43166">
    <property type="entry name" value="AMINO ACID IMPORT ATP-BINDING PROTEIN"/>
    <property type="match status" value="1"/>
</dbReference>
<dbReference type="PANTHER" id="PTHR43166:SF30">
    <property type="entry name" value="METHIONINE IMPORT ATP-BINDING PROTEIN METN"/>
    <property type="match status" value="1"/>
</dbReference>
<dbReference type="Pfam" id="PF00005">
    <property type="entry name" value="ABC_tran"/>
    <property type="match status" value="1"/>
</dbReference>
<dbReference type="Pfam" id="PF09383">
    <property type="entry name" value="NIL"/>
    <property type="match status" value="1"/>
</dbReference>
<dbReference type="SMART" id="SM00382">
    <property type="entry name" value="AAA"/>
    <property type="match status" value="1"/>
</dbReference>
<dbReference type="SMART" id="SM00930">
    <property type="entry name" value="NIL"/>
    <property type="match status" value="1"/>
</dbReference>
<dbReference type="SUPFAM" id="SSF55021">
    <property type="entry name" value="ACT-like"/>
    <property type="match status" value="1"/>
</dbReference>
<dbReference type="SUPFAM" id="SSF52540">
    <property type="entry name" value="P-loop containing nucleoside triphosphate hydrolases"/>
    <property type="match status" value="1"/>
</dbReference>
<dbReference type="PROSITE" id="PS00211">
    <property type="entry name" value="ABC_TRANSPORTER_1"/>
    <property type="match status" value="1"/>
</dbReference>
<dbReference type="PROSITE" id="PS50893">
    <property type="entry name" value="ABC_TRANSPORTER_2"/>
    <property type="match status" value="1"/>
</dbReference>
<dbReference type="PROSITE" id="PS51264">
    <property type="entry name" value="METN"/>
    <property type="match status" value="1"/>
</dbReference>
<sequence>MISIERLSKTYPQGGLPMVALEEVSLEIPTGSVFGIVGRSGAGKSTLIRCLNLLERPTSGRIQVDGRELTTLSDRELRLQRQNIGMIFQNFHLLHSRNVWDNIAVGLEIIGMPKAQRQQRVAELLDLVGLSDKAYAFPSQLSGGQKQRVGIARALAAKPSYLLSDEATSALDPETTASILALLSDINRQLGLTIVLITHELDVVKSICDNAALLETGRVVETGAIADLLSDPLSRLGRSLLPTCGPLSVSATPRAELTFFDTLAASPVLSALAQQHAVGVTLLGGGVEFIGGQRVGRLHVDFNRPEGGLNLAEVLQFLNDRGVRAELI</sequence>
<accession>Q7CHF8</accession>
<accession>Q74VM4</accession>
<evidence type="ECO:0000255" key="1">
    <source>
        <dbReference type="HAMAP-Rule" id="MF_01719"/>
    </source>
</evidence>